<dbReference type="EMBL" id="BX284603">
    <property type="protein sequence ID" value="CAB03344.2"/>
    <property type="molecule type" value="Genomic_DNA"/>
</dbReference>
<dbReference type="PIR" id="T24860">
    <property type="entry name" value="T24860"/>
</dbReference>
<dbReference type="RefSeq" id="NP_499816.2">
    <property type="nucleotide sequence ID" value="NM_067415.6"/>
</dbReference>
<dbReference type="SMR" id="O45782"/>
<dbReference type="FunCoup" id="O45782">
    <property type="interactions" value="178"/>
</dbReference>
<dbReference type="STRING" id="6239.T12D8.4.1"/>
<dbReference type="PaxDb" id="6239-T12D8.4"/>
<dbReference type="PeptideAtlas" id="O45782"/>
<dbReference type="EnsemblMetazoa" id="T12D8.4.1">
    <property type="protein sequence ID" value="T12D8.4.1"/>
    <property type="gene ID" value="WBGene00011732"/>
</dbReference>
<dbReference type="GeneID" id="176799"/>
<dbReference type="KEGG" id="cel:CELE_T12D8.4"/>
<dbReference type="UCSC" id="T12D8.4">
    <property type="organism name" value="c. elegans"/>
</dbReference>
<dbReference type="AGR" id="WB:WBGene00011732"/>
<dbReference type="CTD" id="176799"/>
<dbReference type="WormBase" id="T12D8.4">
    <property type="protein sequence ID" value="CE33831"/>
    <property type="gene ID" value="WBGene00011732"/>
    <property type="gene designation" value="arrd-17"/>
</dbReference>
<dbReference type="eggNOG" id="KOG3780">
    <property type="taxonomic scope" value="Eukaryota"/>
</dbReference>
<dbReference type="HOGENOM" id="CLU_039221_0_1_1"/>
<dbReference type="InParanoid" id="O45782"/>
<dbReference type="OMA" id="GRARTYW"/>
<dbReference type="OrthoDB" id="2333384at2759"/>
<dbReference type="PhylomeDB" id="O45782"/>
<dbReference type="PRO" id="PR:O45782"/>
<dbReference type="Proteomes" id="UP000001940">
    <property type="component" value="Chromosome III"/>
</dbReference>
<dbReference type="Bgee" id="WBGene00011732">
    <property type="expression patterns" value="Expressed in larva and 3 other cell types or tissues"/>
</dbReference>
<dbReference type="GO" id="GO:0005737">
    <property type="term" value="C:cytoplasm"/>
    <property type="evidence" value="ECO:0000318"/>
    <property type="project" value="GO_Central"/>
</dbReference>
<dbReference type="GO" id="GO:0030346">
    <property type="term" value="F:protein phosphatase 2B binding"/>
    <property type="evidence" value="ECO:0000353"/>
    <property type="project" value="WormBase"/>
</dbReference>
<dbReference type="GO" id="GO:0015031">
    <property type="term" value="P:protein transport"/>
    <property type="evidence" value="ECO:0000318"/>
    <property type="project" value="GO_Central"/>
</dbReference>
<dbReference type="Gene3D" id="2.60.40.640">
    <property type="match status" value="2"/>
</dbReference>
<dbReference type="InterPro" id="IPR014752">
    <property type="entry name" value="Arrestin-like_C"/>
</dbReference>
<dbReference type="InterPro" id="IPR011021">
    <property type="entry name" value="Arrestin-like_N"/>
</dbReference>
<dbReference type="InterPro" id="IPR011022">
    <property type="entry name" value="Arrestin_C-like"/>
</dbReference>
<dbReference type="InterPro" id="IPR050357">
    <property type="entry name" value="Arrestin_domain-protein"/>
</dbReference>
<dbReference type="InterPro" id="IPR014756">
    <property type="entry name" value="Ig_E-set"/>
</dbReference>
<dbReference type="PANTHER" id="PTHR11188">
    <property type="entry name" value="ARRESTIN DOMAIN CONTAINING PROTEIN"/>
    <property type="match status" value="1"/>
</dbReference>
<dbReference type="PANTHER" id="PTHR11188:SF176">
    <property type="entry name" value="ARRESTIN DOMAIN-CONTAINING PROTEIN 1"/>
    <property type="match status" value="1"/>
</dbReference>
<dbReference type="Pfam" id="PF02752">
    <property type="entry name" value="Arrestin_C"/>
    <property type="match status" value="1"/>
</dbReference>
<dbReference type="Pfam" id="PF00339">
    <property type="entry name" value="Arrestin_N"/>
    <property type="match status" value="1"/>
</dbReference>
<dbReference type="SMART" id="SM01017">
    <property type="entry name" value="Arrestin_C"/>
    <property type="match status" value="1"/>
</dbReference>
<dbReference type="SUPFAM" id="SSF81296">
    <property type="entry name" value="E set domains"/>
    <property type="match status" value="2"/>
</dbReference>
<protein>
    <recommendedName>
        <fullName evidence="4">Arrestin domain-containing protein 17</fullName>
    </recommendedName>
    <alternativeName>
        <fullName evidence="3">Calcineurin-interacting protein 1</fullName>
    </alternativeName>
</protein>
<keyword id="KW-0085">Behavior</keyword>
<keyword id="KW-0597">Phosphoprotein</keyword>
<keyword id="KW-1185">Reference proteome</keyword>
<reference evidence="5" key="1">
    <citation type="journal article" date="1998" name="Science">
        <title>Genome sequence of the nematode C. elegans: a platform for investigating biology.</title>
        <authorList>
            <consortium name="The C. elegans sequencing consortium"/>
        </authorList>
    </citation>
    <scope>NUCLEOTIDE SEQUENCE [LARGE SCALE GENOMIC DNA]</scope>
    <source>
        <strain evidence="5">Bristol N2</strain>
    </source>
</reference>
<reference evidence="4" key="2">
    <citation type="journal article" date="2012" name="J. Mol. Biol.">
        <title>CNP-1 (ARRD-17), a novel substrate of calcineurin, is critical for modulation of egg-laying and locomotion in response to food and lysine sensation in Caenorhabditis elegans.</title>
        <authorList>
            <person name="Jee C."/>
            <person name="Choi T.W."/>
            <person name="Kalichamy K."/>
            <person name="Yee J.Z."/>
            <person name="Song H.O."/>
            <person name="Ji Y.J."/>
            <person name="Lee J."/>
            <person name="Lee J.I."/>
            <person name="L'Etoile N.D."/>
            <person name="Ahnn J."/>
            <person name="Lee S.K."/>
        </authorList>
    </citation>
    <scope>FUNCTION</scope>
    <scope>INTERACTION WITH TAX-6</scope>
    <scope>TISSUE SPECIFICITY</scope>
    <scope>PHOSPHORYLATION</scope>
    <scope>DISRUPTION PHENOTYPE</scope>
</reference>
<sequence>MVQLDRFEILFNNPEQAYFAGQEISGKVIIENKEPKKVNEILLELKGRARTYWTKHSGKSRKHCSHSEPYFLEQFNPGYTHKFTVVKDGKEKERILPAGIHQVPFSYTLPKSLPSSFEGEFGHIRYTCKAICERPWDFDIVSRKAFTVVGIEDINSDPKLNEPATCVESNHAVTFCCRSAGSVTGEIRISKCGYTPGEKIDVSFKVINLSSKTRTTALRFVQQTTYKAKTFAGHEHIKNVVRVISKIDKGEVPGGSTTEWQEESITIPSLPPKLGKCKILSVTYSVELEVEQTLTVPCPIVIGSIPQLSQLLIHSKQSVQSAGNGSLPKSSIKDSPPKWDSESCVQVTITDESGQLVEELGNEMEALLSARKRVRMPSSILSELYPTMPSPYYKESFFGASDISEEKEQAQFGEASFAPKYPFYTD</sequence>
<proteinExistence type="evidence at protein level"/>
<comment type="function">
    <text evidence="2">Involved in several behavioral responses including chemotaxis towards lysine and adaptation to repeated osmotic stress. In addition, plays a role in resuming egg-laying and locomotion after starvation.</text>
</comment>
<comment type="subunit">
    <text evidence="2">Interacts with tax-6.</text>
</comment>
<comment type="tissue specificity">
    <text evidence="2">Expressed from the comma stage to adulthood in the nervous system, including sensory neurons and interneurons posterior to the nerve ring, dorsal and ventral nerve cords, tail ganglia and, CEP, HSN, ASK, ADL, ASH and ASJ neurons.</text>
</comment>
<comment type="PTM">
    <text evidence="2">Phosphorylated. Dephosphorylated by tax-6 in vitro.</text>
</comment>
<comment type="disruption phenotype">
    <text evidence="2">Viable. Shows defects in several behavioral responses, including abnormal avoidance response to the chemoattractant lysine and impaired adaptability induced by prior exposure to high concentration of fructose. Delay in egg-laying upon refeeding after starvation. Slight decrease in brood size.</text>
</comment>
<comment type="similarity">
    <text evidence="4">Belongs to the arrestin family.</text>
</comment>
<gene>
    <name evidence="6" type="primary">arrd-17</name>
    <name evidence="6" type="synonym">cnp-1</name>
    <name evidence="6" type="ORF">T12D8.4</name>
</gene>
<evidence type="ECO:0000256" key="1">
    <source>
        <dbReference type="SAM" id="MobiDB-lite"/>
    </source>
</evidence>
<evidence type="ECO:0000269" key="2">
    <source>
    </source>
</evidence>
<evidence type="ECO:0000303" key="3">
    <source>
    </source>
</evidence>
<evidence type="ECO:0000305" key="4"/>
<evidence type="ECO:0000312" key="5">
    <source>
        <dbReference type="Proteomes" id="UP000001940"/>
    </source>
</evidence>
<evidence type="ECO:0000312" key="6">
    <source>
        <dbReference type="WormBase" id="T12D8.4"/>
    </source>
</evidence>
<organism evidence="5">
    <name type="scientific">Caenorhabditis elegans</name>
    <dbReference type="NCBI Taxonomy" id="6239"/>
    <lineage>
        <taxon>Eukaryota</taxon>
        <taxon>Metazoa</taxon>
        <taxon>Ecdysozoa</taxon>
        <taxon>Nematoda</taxon>
        <taxon>Chromadorea</taxon>
        <taxon>Rhabditida</taxon>
        <taxon>Rhabditina</taxon>
        <taxon>Rhabditomorpha</taxon>
        <taxon>Rhabditoidea</taxon>
        <taxon>Rhabditidae</taxon>
        <taxon>Peloderinae</taxon>
        <taxon>Caenorhabditis</taxon>
    </lineage>
</organism>
<feature type="chain" id="PRO_0000436779" description="Arrestin domain-containing protein 17" evidence="4">
    <location>
        <begin position="1"/>
        <end position="426"/>
    </location>
</feature>
<feature type="region of interest" description="Disordered" evidence="1">
    <location>
        <begin position="320"/>
        <end position="340"/>
    </location>
</feature>
<feature type="compositionally biased region" description="Polar residues" evidence="1">
    <location>
        <begin position="320"/>
        <end position="329"/>
    </location>
</feature>
<feature type="compositionally biased region" description="Basic and acidic residues" evidence="1">
    <location>
        <begin position="331"/>
        <end position="340"/>
    </location>
</feature>
<accession>O45782</accession>
<name>ARD17_CAEEL</name>